<dbReference type="EMBL" id="CR860146">
    <property type="protein sequence ID" value="CAH92289.1"/>
    <property type="molecule type" value="mRNA"/>
</dbReference>
<dbReference type="RefSeq" id="NP_001126338.1">
    <property type="nucleotide sequence ID" value="NM_001132866.1"/>
</dbReference>
<dbReference type="BMRB" id="Q5R7H1"/>
<dbReference type="SMR" id="Q5R7H1"/>
<dbReference type="FunCoup" id="Q5R7H1">
    <property type="interactions" value="2242"/>
</dbReference>
<dbReference type="STRING" id="9601.ENSPPYP00000009996"/>
<dbReference type="GeneID" id="100173319"/>
<dbReference type="KEGG" id="pon:100173319"/>
<dbReference type="CTD" id="10241"/>
<dbReference type="eggNOG" id="ENOG502QT1M">
    <property type="taxonomic scope" value="Eukaryota"/>
</dbReference>
<dbReference type="InParanoid" id="Q5R7H1"/>
<dbReference type="OrthoDB" id="10015001at2759"/>
<dbReference type="Proteomes" id="UP000001595">
    <property type="component" value="Unplaced"/>
</dbReference>
<dbReference type="GO" id="GO:0005776">
    <property type="term" value="C:autophagosome"/>
    <property type="evidence" value="ECO:0000250"/>
    <property type="project" value="GO_Central"/>
</dbReference>
<dbReference type="GO" id="GO:0000421">
    <property type="term" value="C:autophagosome membrane"/>
    <property type="evidence" value="ECO:0007669"/>
    <property type="project" value="UniProtKB-SubCell"/>
</dbReference>
<dbReference type="GO" id="GO:0031410">
    <property type="term" value="C:cytoplasmic vesicle"/>
    <property type="evidence" value="ECO:0007669"/>
    <property type="project" value="UniProtKB-KW"/>
</dbReference>
<dbReference type="GO" id="GO:0005856">
    <property type="term" value="C:cytoskeleton"/>
    <property type="evidence" value="ECO:0007669"/>
    <property type="project" value="UniProtKB-SubCell"/>
</dbReference>
<dbReference type="GO" id="GO:0048471">
    <property type="term" value="C:perinuclear region of cytoplasm"/>
    <property type="evidence" value="ECO:0007669"/>
    <property type="project" value="UniProtKB-SubCell"/>
</dbReference>
<dbReference type="GO" id="GO:0016605">
    <property type="term" value="C:PML body"/>
    <property type="evidence" value="ECO:0007669"/>
    <property type="project" value="TreeGrafter"/>
</dbReference>
<dbReference type="GO" id="GO:0008270">
    <property type="term" value="F:zinc ion binding"/>
    <property type="evidence" value="ECO:0007669"/>
    <property type="project" value="UniProtKB-KW"/>
</dbReference>
<dbReference type="GO" id="GO:1901098">
    <property type="term" value="P:positive regulation of autophagosome maturation"/>
    <property type="evidence" value="ECO:0000250"/>
    <property type="project" value="GO_Central"/>
</dbReference>
<dbReference type="GO" id="GO:0098792">
    <property type="term" value="P:xenophagy"/>
    <property type="evidence" value="ECO:0000250"/>
    <property type="project" value="GO_Central"/>
</dbReference>
<dbReference type="CDD" id="cd21968">
    <property type="entry name" value="Zn-C2H2_CALCOCO2"/>
    <property type="match status" value="1"/>
</dbReference>
<dbReference type="FunFam" id="2.60.40.2840:FF:000002">
    <property type="entry name" value="Tax1-binding protein 1 isoform 2"/>
    <property type="match status" value="1"/>
</dbReference>
<dbReference type="Gene3D" id="2.60.40.2840">
    <property type="match status" value="1"/>
</dbReference>
<dbReference type="Gene3D" id="6.20.250.40">
    <property type="match status" value="1"/>
</dbReference>
<dbReference type="InterPro" id="IPR041641">
    <property type="entry name" value="CALCOCO1/2_Zn_UBZ1"/>
</dbReference>
<dbReference type="InterPro" id="IPR041611">
    <property type="entry name" value="SKICH"/>
</dbReference>
<dbReference type="InterPro" id="IPR051002">
    <property type="entry name" value="UBA_autophagy_assoc_protein"/>
</dbReference>
<dbReference type="PANTHER" id="PTHR31915:SF4">
    <property type="entry name" value="CALCIUM-BINDING AND COILED-COIL DOMAIN-CONTAINING PROTEIN 2"/>
    <property type="match status" value="1"/>
</dbReference>
<dbReference type="PANTHER" id="PTHR31915">
    <property type="entry name" value="SKICH DOMAIN-CONTAINING PROTEIN"/>
    <property type="match status" value="1"/>
</dbReference>
<dbReference type="Pfam" id="PF17751">
    <property type="entry name" value="SKICH"/>
    <property type="match status" value="1"/>
</dbReference>
<dbReference type="PROSITE" id="PS51905">
    <property type="entry name" value="ZF_UBZ1"/>
    <property type="match status" value="1"/>
</dbReference>
<gene>
    <name evidence="1" type="primary">CALCOCO2</name>
    <name evidence="1" type="synonym">NDP52</name>
</gene>
<feature type="chain" id="PRO_0000312340" description="Calcium-binding and coiled-coil domain-containing protein 2">
    <location>
        <begin position="1"/>
        <end position="446"/>
    </location>
</feature>
<feature type="zinc finger region" description="UBZ1-type" evidence="3">
    <location>
        <begin position="419"/>
        <end position="444"/>
    </location>
</feature>
<feature type="region of interest" description="Interaction with LGALS8" evidence="1">
    <location>
        <begin position="371"/>
        <end position="381"/>
    </location>
</feature>
<feature type="region of interest" description="Interaction with MYO6" evidence="1">
    <location>
        <begin position="395"/>
        <end position="446"/>
    </location>
</feature>
<feature type="coiled-coil region" evidence="2">
    <location>
        <begin position="137"/>
        <end position="349"/>
    </location>
</feature>
<feature type="short sequence motif" description="CLIR" evidence="1">
    <location>
        <begin position="133"/>
        <end position="136"/>
    </location>
</feature>
<feature type="short sequence motif" description="LIR-like" evidence="1">
    <location>
        <begin position="203"/>
        <end position="206"/>
    </location>
</feature>
<feature type="binding site" evidence="3">
    <location>
        <position position="422"/>
    </location>
    <ligand>
        <name>Zn(2+)</name>
        <dbReference type="ChEBI" id="CHEBI:29105"/>
    </ligand>
</feature>
<feature type="binding site" evidence="3">
    <location>
        <position position="425"/>
    </location>
    <ligand>
        <name>Zn(2+)</name>
        <dbReference type="ChEBI" id="CHEBI:29105"/>
    </ligand>
</feature>
<feature type="binding site" evidence="3">
    <location>
        <position position="440"/>
    </location>
    <ligand>
        <name>Zn(2+)</name>
        <dbReference type="ChEBI" id="CHEBI:29105"/>
    </ligand>
</feature>
<feature type="binding site" evidence="3">
    <location>
        <position position="444"/>
    </location>
    <ligand>
        <name>Zn(2+)</name>
        <dbReference type="ChEBI" id="CHEBI:29105"/>
    </ligand>
</feature>
<feature type="modified residue" description="Phosphoserine" evidence="1">
    <location>
        <position position="445"/>
    </location>
</feature>
<reference key="1">
    <citation type="submission" date="2004-11" db="EMBL/GenBank/DDBJ databases">
        <authorList>
            <consortium name="The German cDNA consortium"/>
        </authorList>
    </citation>
    <scope>NUCLEOTIDE SEQUENCE [LARGE SCALE MRNA]</scope>
    <source>
        <tissue>Kidney</tissue>
    </source>
</reference>
<organism>
    <name type="scientific">Pongo abelii</name>
    <name type="common">Sumatran orangutan</name>
    <name type="synonym">Pongo pygmaeus abelii</name>
    <dbReference type="NCBI Taxonomy" id="9601"/>
    <lineage>
        <taxon>Eukaryota</taxon>
        <taxon>Metazoa</taxon>
        <taxon>Chordata</taxon>
        <taxon>Craniata</taxon>
        <taxon>Vertebrata</taxon>
        <taxon>Euteleostomi</taxon>
        <taxon>Mammalia</taxon>
        <taxon>Eutheria</taxon>
        <taxon>Euarchontoglires</taxon>
        <taxon>Primates</taxon>
        <taxon>Haplorrhini</taxon>
        <taxon>Catarrhini</taxon>
        <taxon>Hominidae</taxon>
        <taxon>Pongo</taxon>
    </lineage>
</organism>
<sequence>MEETIEDPPTSAVLLDHCHFSQVIFSSVEKFYIPGGDVTCHYTFTQHFIPRRKDWIGIFRVGWKTTREYYTFMWVTLPIDLNNKSAKQQEVQFKAYYLPKDDEYYQFCYVDQDGVVRGASIPFQFRPENEEDILVVTTQGEVEEIEQHNKELCKENQELKDNCVSLQKQNSDMQAELQKKQEELETLQSINKKLELKVKEQKDYWETELLQLKEQNQKMSSENEKMGIRVDQLQAQLSTQEKEMEKLVQGDQDKTEQLEQLKKENDHLFLSLTEQRKDQKKLEQTVEQMKQNETTAMKKQQELMDENFDLSKRLSENKIICNALQREKERLEGENDLLKRENSRLLSYMGLDFNSLPYQVPTSDEGGAGQNPGLVYGNPYSGIQESSSPSPLSIKKCPICKADDICDHILEQQQMQPLCLNCPICDKIFPATEKQIFEDHVFCHSL</sequence>
<name>CACO2_PONAB</name>
<evidence type="ECO:0000250" key="1">
    <source>
        <dbReference type="UniProtKB" id="Q13137"/>
    </source>
</evidence>
<evidence type="ECO:0000255" key="2"/>
<evidence type="ECO:0000255" key="3">
    <source>
        <dbReference type="PROSITE-ProRule" id="PRU01253"/>
    </source>
</evidence>
<evidence type="ECO:0000305" key="4"/>
<comment type="function">
    <text evidence="1">Xenophagy-specific receptor required for autophagy-mediated intracellular bacteria degradation (By similarity). Acts as an effector protein of galectin-sensed membrane damage that restricts the proliferation of infecting pathogens upon entry into the cytosol by targeting LGALS8-associated bacteria for autophagy (By similarity). Initially orchestrates bacteria targeting to autophagosomes and subsequently ensures pathogen degradation by regulating pathogen-containing autophagosome maturation (By similarity). Bacteria targeting to autophagosomes relies on its interaction with MAP1LC3A, MAP1LC3B and/or GABARAPL2, whereas regulation of pathogen-containing autophagosome maturation requires the interaction with MAP3LC3C (By similarity). May play a role in ruffle formation and actin cytoskeleton organization and seems to negatively regulate constitutive secretion (By similarity).</text>
</comment>
<comment type="subunit">
    <text evidence="1">Dimer. Part of a complex consisting of CALCOCO2, TAX1BP1 and MYO6. Interacts with MYO6 (By similarity). Interacts with GEMIN4. Interacts with ATG8 family members MAP1LC3A, MAP1LC3B, GABARAP, GABARAPL1 and GABARAPL2. Interacts with ATG8 family member MAP1LC3C. Interacts with LGALS8. Interacts with TOM1; the interaction is indirect and is mediated by MYO6, which acts as a bridge between TOM1 and CALCOCO2 (By similarity). Interacts with AZI2 (By similarity).</text>
</comment>
<comment type="subcellular location">
    <subcellularLocation>
        <location evidence="1">Cytoplasm</location>
        <location evidence="1">Perinuclear region</location>
    </subcellularLocation>
    <subcellularLocation>
        <location evidence="1">Cytoplasm</location>
        <location evidence="1">Cytoskeleton</location>
    </subcellularLocation>
    <subcellularLocation>
        <location evidence="1">Cytoplasmic vesicle</location>
        <location evidence="1">Autophagosome membrane</location>
        <topology evidence="4">Peripheral membrane protein</topology>
    </subcellularLocation>
</comment>
<comment type="domain">
    <text evidence="1">The MYO6-binding domain is required for autophagy-mediated degradation of infecting bacteria such as Salmonella typhimurium, but not for bacteria targeting to autophagosomes.</text>
</comment>
<comment type="domain">
    <text evidence="1">The LGALS8-binding domain is essential for the recruitment to cytosol-exposed infecting bacteria.</text>
</comment>
<comment type="domain">
    <text evidence="1">The CLIR (LC3C-interacting region) motif is required for interaction with MAP1LC3C, but dispensable for CALCOCO2-mediated autophagosome maturation.</text>
</comment>
<comment type="domain">
    <text evidence="1">The LIR-like motif is required for interaction with MAP1LC3A, MAP1LC3B and GABARAPL2, as well as for CALCOCO2-mediated autophagosome maturation.</text>
</comment>
<comment type="similarity">
    <text evidence="4">Belongs to the CALCOCO family.</text>
</comment>
<protein>
    <recommendedName>
        <fullName evidence="1">Calcium-binding and coiled-coil domain-containing protein 2</fullName>
    </recommendedName>
    <alternativeName>
        <fullName evidence="1">Antigen nuclear dot 52 kDa protein</fullName>
    </alternativeName>
    <alternativeName>
        <fullName evidence="1">Nuclear domain 10 protein NDP52</fullName>
        <shortName evidence="1">Nuclear domain 10 protein 52</shortName>
    </alternativeName>
    <alternativeName>
        <fullName evidence="1">Nuclear dot protein 52</fullName>
    </alternativeName>
</protein>
<accession>Q5R7H1</accession>
<keyword id="KW-0072">Autophagy</keyword>
<keyword id="KW-0175">Coiled coil</keyword>
<keyword id="KW-0963">Cytoplasm</keyword>
<keyword id="KW-0968">Cytoplasmic vesicle</keyword>
<keyword id="KW-0206">Cytoskeleton</keyword>
<keyword id="KW-0472">Membrane</keyword>
<keyword id="KW-0479">Metal-binding</keyword>
<keyword id="KW-0597">Phosphoprotein</keyword>
<keyword id="KW-1185">Reference proteome</keyword>
<keyword id="KW-0862">Zinc</keyword>
<keyword id="KW-0863">Zinc-finger</keyword>
<proteinExistence type="evidence at transcript level"/>